<feature type="initiator methionine" description="Removed" evidence="3">
    <location>
        <position position="1"/>
    </location>
</feature>
<feature type="chain" id="PRO_0000317140" description="Nucleosome assembly protein 1-like 4">
    <location>
        <begin position="2"/>
        <end position="386"/>
    </location>
</feature>
<feature type="region of interest" description="Disordered" evidence="5">
    <location>
        <begin position="1"/>
        <end position="29"/>
    </location>
</feature>
<feature type="region of interest" description="Disordered" evidence="5">
    <location>
        <begin position="339"/>
        <end position="386"/>
    </location>
</feature>
<feature type="short sequence motif" description="Nuclear localization signal" evidence="4">
    <location>
        <begin position="265"/>
        <end position="271"/>
    </location>
</feature>
<feature type="compositionally biased region" description="Polar residues" evidence="5">
    <location>
        <begin position="20"/>
        <end position="29"/>
    </location>
</feature>
<feature type="compositionally biased region" description="Acidic residues" evidence="5">
    <location>
        <begin position="339"/>
        <end position="370"/>
    </location>
</feature>
<feature type="modified residue" description="N-acetylalanine" evidence="3">
    <location>
        <position position="2"/>
    </location>
</feature>
<feature type="modified residue" description="Phosphoserine" evidence="3">
    <location>
        <position position="5"/>
    </location>
</feature>
<feature type="modified residue" description="Phosphoserine" evidence="3">
    <location>
        <position position="7"/>
    </location>
</feature>
<feature type="modified residue" description="Phosphoserine" evidence="3">
    <location>
        <position position="12"/>
    </location>
</feature>
<feature type="modified residue" description="Phosphoserine" evidence="2">
    <location>
        <position position="49"/>
    </location>
</feature>
<feature type="modified residue" description="Phosphothreonine" evidence="3">
    <location>
        <position position="51"/>
    </location>
</feature>
<feature type="modified residue" description="Phosphoserine" evidence="2">
    <location>
        <position position="53"/>
    </location>
</feature>
<feature type="modified residue" description="Phosphoserine" evidence="3">
    <location>
        <position position="54"/>
    </location>
</feature>
<feature type="modified residue" description="Phosphothreonine" evidence="3">
    <location>
        <position position="58"/>
    </location>
</feature>
<feature type="modified residue" description="N6-acetyllysine" evidence="1">
    <location>
        <position position="105"/>
    </location>
</feature>
<feature type="modified residue" description="Phosphoserine" evidence="3">
    <location>
        <position position="125"/>
    </location>
</feature>
<feature type="modified residue" description="N6-acetyllysine" evidence="2">
    <location>
        <position position="146"/>
    </location>
</feature>
<feature type="modified residue" description="Phosphoserine" evidence="3">
    <location>
        <position position="304"/>
    </location>
</feature>
<protein>
    <recommendedName>
        <fullName>Nucleosome assembly protein 1-like 4</fullName>
    </recommendedName>
</protein>
<organism>
    <name type="scientific">Bos taurus</name>
    <name type="common">Bovine</name>
    <dbReference type="NCBI Taxonomy" id="9913"/>
    <lineage>
        <taxon>Eukaryota</taxon>
        <taxon>Metazoa</taxon>
        <taxon>Chordata</taxon>
        <taxon>Craniata</taxon>
        <taxon>Vertebrata</taxon>
        <taxon>Euteleostomi</taxon>
        <taxon>Mammalia</taxon>
        <taxon>Eutheria</taxon>
        <taxon>Laurasiatheria</taxon>
        <taxon>Artiodactyla</taxon>
        <taxon>Ruminantia</taxon>
        <taxon>Pecora</taxon>
        <taxon>Bovidae</taxon>
        <taxon>Bovinae</taxon>
        <taxon>Bos</taxon>
    </lineage>
</organism>
<proteinExistence type="evidence at transcript level"/>
<comment type="function">
    <text evidence="3">Acts as a histone chaperone in nucleosome assembly.</text>
</comment>
<comment type="subunit">
    <text evidence="3">Interacts with core (H2A, H2B, H3, H4) and linker (H1) histones.</text>
</comment>
<comment type="subcellular location">
    <subcellularLocation>
        <location evidence="3">Nucleus</location>
    </subcellularLocation>
    <subcellularLocation>
        <location evidence="3">Cytoplasm</location>
    </subcellularLocation>
    <text evidence="3">Present in the cytoplasm and excluded from the nucleus during G0/G1 phase, then relocates to the nucleus by the time cells are in S phase. Phosphorylated form localizes in the cytoplasm during the G0/G1 transition, whereas dephosphorylation leads to relocalization into the nucleus at the G1/S-boundary.</text>
</comment>
<comment type="PTM">
    <text evidence="2">Polyglutamylated and polyglycylated. These 2 modifications occur exclusively on glutamate residues and result in either polyglutamate or polyglycine chains on the gamma-carboxyl group. Both modifications can coexist on the same protein on adjacent residues, and lowering polyglycylation levels increases polyglutamylation, and reciprocally. Polyglutamylated by TTLL4.</text>
</comment>
<comment type="PTM">
    <text evidence="3">Phosphorylated at the G0/G1 boundary but it is not phosphorylated in S-phase. Phosphorylated protein remains in the cytoplasm in a complex with histones during the G0/G1 transition, whereas dephosphorylation triggers its transport into the nucleus at the G1/S-boundary.</text>
</comment>
<comment type="similarity">
    <text evidence="6">Belongs to the nucleosome assembly protein (NAP) family.</text>
</comment>
<accession>Q2TA40</accession>
<evidence type="ECO:0000250" key="1">
    <source>
        <dbReference type="UniProtKB" id="P28656"/>
    </source>
</evidence>
<evidence type="ECO:0000250" key="2">
    <source>
        <dbReference type="UniProtKB" id="Q78ZA7"/>
    </source>
</evidence>
<evidence type="ECO:0000250" key="3">
    <source>
        <dbReference type="UniProtKB" id="Q99733"/>
    </source>
</evidence>
<evidence type="ECO:0000255" key="4"/>
<evidence type="ECO:0000256" key="5">
    <source>
        <dbReference type="SAM" id="MobiDB-lite"/>
    </source>
</evidence>
<evidence type="ECO:0000305" key="6"/>
<sequence length="386" mass="43986">MADNSFSDGVPSDSLEAAKNASNTEKLTDQVMQNPQVLAALQERLDNVSHTPSSYIETLPKAVKRRINALKQLQVKCAHIEAKFYEEVHDLERKYAALYQPLFDKRREFITGDVEPTDAESEWHSETEEEDKLAGDMKNKAVIAEKEAAAAEEPAPRGIPEFWFTIFRNVDMLSELVQEYDEPILKHLQDIKVKFSDPGQPMSFVLEFHFEPDDYFTNPVLTKTYKMKSEPDKADPFSFEGPEIVDCDGCTIDWKKGKNVTVKTIKKKQKHKGRGTVRTITKQVPNDSFFNFFSPLRASGDGESLDEDSEFTLASDFEIGHFFRERIVPRAVLYFTGEAIEDDDNFEEGEEGEEEELEGDEEAEDDDDAEINPKKEPSQPSECKQQ</sequence>
<keyword id="KW-0007">Acetylation</keyword>
<keyword id="KW-0143">Chaperone</keyword>
<keyword id="KW-0963">Cytoplasm</keyword>
<keyword id="KW-0539">Nucleus</keyword>
<keyword id="KW-0597">Phosphoprotein</keyword>
<keyword id="KW-1185">Reference proteome</keyword>
<name>NP1L4_BOVIN</name>
<reference key="1">
    <citation type="submission" date="2005-12" db="EMBL/GenBank/DDBJ databases">
        <authorList>
            <consortium name="NIH - Mammalian Gene Collection (MGC) project"/>
        </authorList>
    </citation>
    <scope>NUCLEOTIDE SEQUENCE [LARGE SCALE MRNA]</scope>
    <source>
        <strain>Crossbred X Angus</strain>
        <tissue>Liver</tissue>
    </source>
</reference>
<dbReference type="EMBL" id="BC111130">
    <property type="protein sequence ID" value="AAI11131.1"/>
    <property type="molecule type" value="mRNA"/>
</dbReference>
<dbReference type="RefSeq" id="NP_001033183.1">
    <property type="nucleotide sequence ID" value="NM_001038094.2"/>
</dbReference>
<dbReference type="SMR" id="Q2TA40"/>
<dbReference type="FunCoup" id="Q2TA40">
    <property type="interactions" value="3456"/>
</dbReference>
<dbReference type="STRING" id="9913.ENSBTAP00000029889"/>
<dbReference type="PaxDb" id="9913-ENSBTAP00000029889"/>
<dbReference type="PeptideAtlas" id="Q2TA40"/>
<dbReference type="GeneID" id="513028"/>
<dbReference type="KEGG" id="bta:513028"/>
<dbReference type="CTD" id="4676"/>
<dbReference type="eggNOG" id="KOG1507">
    <property type="taxonomic scope" value="Eukaryota"/>
</dbReference>
<dbReference type="InParanoid" id="Q2TA40"/>
<dbReference type="OrthoDB" id="27325at2759"/>
<dbReference type="Proteomes" id="UP000009136">
    <property type="component" value="Unplaced"/>
</dbReference>
<dbReference type="GO" id="GO:0000785">
    <property type="term" value="C:chromatin"/>
    <property type="evidence" value="ECO:0000318"/>
    <property type="project" value="GO_Central"/>
</dbReference>
<dbReference type="GO" id="GO:0005737">
    <property type="term" value="C:cytoplasm"/>
    <property type="evidence" value="ECO:0000250"/>
    <property type="project" value="UniProtKB"/>
</dbReference>
<dbReference type="GO" id="GO:0005634">
    <property type="term" value="C:nucleus"/>
    <property type="evidence" value="ECO:0000250"/>
    <property type="project" value="UniProtKB"/>
</dbReference>
<dbReference type="GO" id="GO:0003682">
    <property type="term" value="F:chromatin binding"/>
    <property type="evidence" value="ECO:0000318"/>
    <property type="project" value="GO_Central"/>
</dbReference>
<dbReference type="GO" id="GO:0042393">
    <property type="term" value="F:histone binding"/>
    <property type="evidence" value="ECO:0000318"/>
    <property type="project" value="GO_Central"/>
</dbReference>
<dbReference type="GO" id="GO:0031491">
    <property type="term" value="F:nucleosome binding"/>
    <property type="evidence" value="ECO:0000250"/>
    <property type="project" value="UniProtKB"/>
</dbReference>
<dbReference type="GO" id="GO:0006334">
    <property type="term" value="P:nucleosome assembly"/>
    <property type="evidence" value="ECO:0000250"/>
    <property type="project" value="UniProtKB"/>
</dbReference>
<dbReference type="FunFam" id="1.20.5.1500:FF:000001">
    <property type="entry name" value="Nucleosome assembly protein 1-like 1"/>
    <property type="match status" value="1"/>
</dbReference>
<dbReference type="FunFam" id="3.30.1120.90:FF:000001">
    <property type="entry name" value="Nucleosome assembly protein 1-like 1"/>
    <property type="match status" value="1"/>
</dbReference>
<dbReference type="Gene3D" id="1.20.5.1500">
    <property type="match status" value="1"/>
</dbReference>
<dbReference type="Gene3D" id="3.30.1120.90">
    <property type="entry name" value="Nucleosome assembly protein"/>
    <property type="match status" value="1"/>
</dbReference>
<dbReference type="InterPro" id="IPR037231">
    <property type="entry name" value="NAP-like_sf"/>
</dbReference>
<dbReference type="InterPro" id="IPR002164">
    <property type="entry name" value="NAP_family"/>
</dbReference>
<dbReference type="PANTHER" id="PTHR11875">
    <property type="entry name" value="TESTIS-SPECIFIC Y-ENCODED PROTEIN"/>
    <property type="match status" value="1"/>
</dbReference>
<dbReference type="Pfam" id="PF00956">
    <property type="entry name" value="NAP"/>
    <property type="match status" value="1"/>
</dbReference>
<dbReference type="SUPFAM" id="SSF143113">
    <property type="entry name" value="NAP-like"/>
    <property type="match status" value="1"/>
</dbReference>
<gene>
    <name type="primary">NAP1L4</name>
</gene>